<keyword id="KW-1003">Cell membrane</keyword>
<keyword id="KW-0472">Membrane</keyword>
<keyword id="KW-1185">Reference proteome</keyword>
<keyword id="KW-0812">Transmembrane</keyword>
<keyword id="KW-1133">Transmembrane helix</keyword>
<gene>
    <name type="ordered locus">Amet_0022</name>
</gene>
<organism>
    <name type="scientific">Alkaliphilus metalliredigens (strain QYMF)</name>
    <dbReference type="NCBI Taxonomy" id="293826"/>
    <lineage>
        <taxon>Bacteria</taxon>
        <taxon>Bacillati</taxon>
        <taxon>Bacillota</taxon>
        <taxon>Clostridia</taxon>
        <taxon>Peptostreptococcales</taxon>
        <taxon>Natronincolaceae</taxon>
        <taxon>Alkaliphilus</taxon>
    </lineage>
</organism>
<proteinExistence type="inferred from homology"/>
<name>Y022_ALKMQ</name>
<feature type="chain" id="PRO_0000323475" description="UPF0182 protein Amet_0022">
    <location>
        <begin position="1"/>
        <end position="932"/>
    </location>
</feature>
<feature type="transmembrane region" description="Helical" evidence="1">
    <location>
        <begin position="14"/>
        <end position="34"/>
    </location>
</feature>
<feature type="transmembrane region" description="Helical" evidence="1">
    <location>
        <begin position="60"/>
        <end position="80"/>
    </location>
</feature>
<feature type="transmembrane region" description="Helical" evidence="1">
    <location>
        <begin position="104"/>
        <end position="124"/>
    </location>
</feature>
<feature type="transmembrane region" description="Helical" evidence="1">
    <location>
        <begin position="166"/>
        <end position="186"/>
    </location>
</feature>
<feature type="transmembrane region" description="Helical" evidence="1">
    <location>
        <begin position="208"/>
        <end position="228"/>
    </location>
</feature>
<feature type="transmembrane region" description="Helical" evidence="1">
    <location>
        <begin position="256"/>
        <end position="276"/>
    </location>
</feature>
<feature type="transmembrane region" description="Helical" evidence="1">
    <location>
        <begin position="286"/>
        <end position="306"/>
    </location>
</feature>
<reference key="1">
    <citation type="journal article" date="2016" name="Genome Announc.">
        <title>Complete genome sequence of Alkaliphilus metalliredigens strain QYMF, an alkaliphilic and metal-reducing bacterium isolated from borax-contaminated leachate ponds.</title>
        <authorList>
            <person name="Hwang C."/>
            <person name="Copeland A."/>
            <person name="Lucas S."/>
            <person name="Lapidus A."/>
            <person name="Barry K."/>
            <person name="Detter J.C."/>
            <person name="Glavina Del Rio T."/>
            <person name="Hammon N."/>
            <person name="Israni S."/>
            <person name="Dalin E."/>
            <person name="Tice H."/>
            <person name="Pitluck S."/>
            <person name="Chertkov O."/>
            <person name="Brettin T."/>
            <person name="Bruce D."/>
            <person name="Han C."/>
            <person name="Schmutz J."/>
            <person name="Larimer F."/>
            <person name="Land M.L."/>
            <person name="Hauser L."/>
            <person name="Kyrpides N."/>
            <person name="Mikhailova N."/>
            <person name="Ye Q."/>
            <person name="Zhou J."/>
            <person name="Richardson P."/>
            <person name="Fields M.W."/>
        </authorList>
    </citation>
    <scope>NUCLEOTIDE SEQUENCE [LARGE SCALE GENOMIC DNA]</scope>
    <source>
        <strain>QYMF</strain>
    </source>
</reference>
<sequence>MSEEEKELKNRKKVIIGLGIFIFIFLFGFLSEILSFITDYQWFQELGYESVFLTKLKTQLQIGIPLFIVGTILYYLYLIGLKKEYYKQIKSYHMDISEKRVNQILILPAFVFGLMTSTSVAGSLWFDILLYANAKPFNLTDPLFNNDITYYLLELPFLKQLLNTVTSILFLMVIITVIFYVIMFLIRRPTLYEVKADLQWNSNFFVSLLQIALKQFAALGVIFFLVLAARYYLGVYDLLYSTRGVVYGASYTDTHVTLWVYRAQILASLLSATGVVYAYVKRNPKLLLIAPISIIAVGILGNVISLGVQNFIVSPNEIARELPYIEHNLSYTRRAYGIGEIQETDFPYDTELTREDIENNQEIIDNIRINDYRPALEVYNQIQAFRPYYRFVDVDIDRYWVNGEYRQVFIAPRELDQRELSDNAQTWINQTLKYTHGYGVALSPVNEVTSGGQPVLWMRNFPLVSSVDIEVTRPEIYFGELTDQYIIVNTKEKEFDYPLDNDNAETLYEGTAGVPLKGVNRLLYSWRQGTLKMLLSGNITSESRIVFDRNIVTRMNKIAPFITYDEDPYIVINEGKLYWMIDGYTISGNFPYAEPYMAGNNNYIRNSVKVVIDAYNGTVDYYISDEEDPIILTYQAIFPDLFKPLDDMPEGLKAHIRYPQVLFDIQSEVYATYHMNNPRVFYNKEDLWRIAREKYDQNEQTIESQYMMMKLPGEESEEFVISVPYTPIRLDNMRALLVARNDGEQYGELIAYRMPKDQNVYGPKQIEDRIDQNTTISQNLSLWGEGGSSVIRGNLLVVPIENSLLYVEPLYIRATSGTSLPEVKMVIVSFGDQIVMEPTLEEALNRIFGARVEEIREEIQEEVEGDTDGETITEEITEGLGEASQLIRRASEVFDRAQEASRQGNWSAYGDALEELEQVLRQLQETTQVLEN</sequence>
<dbReference type="EMBL" id="CP000724">
    <property type="protein sequence ID" value="ABR46265.1"/>
    <property type="molecule type" value="Genomic_DNA"/>
</dbReference>
<dbReference type="SMR" id="A6TJ97"/>
<dbReference type="STRING" id="293826.Amet_0022"/>
<dbReference type="KEGG" id="amt:Amet_0022"/>
<dbReference type="eggNOG" id="COG1615">
    <property type="taxonomic scope" value="Bacteria"/>
</dbReference>
<dbReference type="HOGENOM" id="CLU_007733_0_0_9"/>
<dbReference type="OrthoDB" id="9763654at2"/>
<dbReference type="Proteomes" id="UP000001572">
    <property type="component" value="Chromosome"/>
</dbReference>
<dbReference type="GO" id="GO:0005576">
    <property type="term" value="C:extracellular region"/>
    <property type="evidence" value="ECO:0007669"/>
    <property type="project" value="TreeGrafter"/>
</dbReference>
<dbReference type="GO" id="GO:0005886">
    <property type="term" value="C:plasma membrane"/>
    <property type="evidence" value="ECO:0007669"/>
    <property type="project" value="UniProtKB-SubCell"/>
</dbReference>
<dbReference type="HAMAP" id="MF_01600">
    <property type="entry name" value="UPF0182"/>
    <property type="match status" value="1"/>
</dbReference>
<dbReference type="InterPro" id="IPR005372">
    <property type="entry name" value="UPF0182"/>
</dbReference>
<dbReference type="PANTHER" id="PTHR39344">
    <property type="entry name" value="UPF0182 PROTEIN SLL1060"/>
    <property type="match status" value="1"/>
</dbReference>
<dbReference type="PANTHER" id="PTHR39344:SF1">
    <property type="entry name" value="UPF0182 PROTEIN SLL1060"/>
    <property type="match status" value="1"/>
</dbReference>
<dbReference type="Pfam" id="PF03699">
    <property type="entry name" value="UPF0182"/>
    <property type="match status" value="1"/>
</dbReference>
<accession>A6TJ97</accession>
<comment type="subcellular location">
    <subcellularLocation>
        <location evidence="1">Cell membrane</location>
        <topology evidence="1">Multi-pass membrane protein</topology>
    </subcellularLocation>
</comment>
<comment type="similarity">
    <text evidence="1">Belongs to the UPF0182 family.</text>
</comment>
<protein>
    <recommendedName>
        <fullName evidence="1">UPF0182 protein Amet_0022</fullName>
    </recommendedName>
</protein>
<evidence type="ECO:0000255" key="1">
    <source>
        <dbReference type="HAMAP-Rule" id="MF_01600"/>
    </source>
</evidence>